<evidence type="ECO:0000255" key="1">
    <source>
        <dbReference type="PROSITE-ProRule" id="PRU10023"/>
    </source>
</evidence>
<evidence type="ECO:0000305" key="2"/>
<reference key="1">
    <citation type="journal article" date="1995" name="Proc. Natl. Acad. Sci. U.S.A.">
        <title>Evolution of the chalcone synthase gene family in the genus Ipomoea.</title>
        <authorList>
            <person name="Durbin M.L."/>
            <person name="Learn G.H."/>
            <person name="Huttley G.A."/>
            <person name="Clegg M.T."/>
        </authorList>
    </citation>
    <scope>NUCLEOTIDE SEQUENCE [GENOMIC DNA]</scope>
</reference>
<feature type="chain" id="PRO_0000216035" description="Chalcone synthase A">
    <location>
        <begin position="1"/>
        <end position="344" status="greater than"/>
    </location>
</feature>
<feature type="active site" evidence="1">
    <location>
        <position position="167"/>
    </location>
</feature>
<feature type="non-terminal residue">
    <location>
        <position position="344"/>
    </location>
</feature>
<organism>
    <name type="scientific">Ipomoea nil</name>
    <name type="common">Japanese morning glory</name>
    <name type="synonym">Pharbitis nil</name>
    <dbReference type="NCBI Taxonomy" id="35883"/>
    <lineage>
        <taxon>Eukaryota</taxon>
        <taxon>Viridiplantae</taxon>
        <taxon>Streptophyta</taxon>
        <taxon>Embryophyta</taxon>
        <taxon>Tracheophyta</taxon>
        <taxon>Spermatophyta</taxon>
        <taxon>Magnoliopsida</taxon>
        <taxon>eudicotyledons</taxon>
        <taxon>Gunneridae</taxon>
        <taxon>Pentapetalae</taxon>
        <taxon>asterids</taxon>
        <taxon>lamiids</taxon>
        <taxon>Solanales</taxon>
        <taxon>Convolvulaceae</taxon>
        <taxon>Ipomoeeae</taxon>
        <taxon>Ipomoea</taxon>
    </lineage>
</organism>
<name>CHSA_IPONI</name>
<keyword id="KW-0012">Acyltransferase</keyword>
<keyword id="KW-0284">Flavonoid biosynthesis</keyword>
<keyword id="KW-0808">Transferase</keyword>
<gene>
    <name type="primary">CHSA</name>
</gene>
<protein>
    <recommendedName>
        <fullName>Chalcone synthase A</fullName>
        <ecNumber>2.3.1.74</ecNumber>
    </recommendedName>
    <alternativeName>
        <fullName>Naringenin-chalcone synthase A</fullName>
        <shortName>CHS-A</shortName>
    </alternativeName>
</protein>
<sequence length="344" mass="38352">MSTILTNTWTRREKRIEGHAKILAIGTAIPANWVDQTTYPDFYFRITNSEHLLEHKEKFRRICNKSKIRKRHLVITEELLKKNPNLCTYNEASLNTRQDILVSEVPKLGKEAAMKAIKEWGRPISEITHLVFCTSSGVDMPGADFQLAKLLGLSSSVNRLMMYQQGCNAGAAMLRLAKDLAENNKGGRVLVVCSEVMLNVFRGPSLEQEDYLLAQCLFGDGSAAVIVGTEPRPGLETPLFELVSAAQTTIPDTDSHLKLHLREMGLTFHCSKAVPSLITQNVEDYLVKAFEPFGISDWNSIFWILHPGGIAILDRVEEKLGLEPEKLRASRDVLSESGNLTSAC</sequence>
<comment type="function">
    <text>The primary product of this enzyme is 4,2',4',6'-tetrahydroxychalcone (also termed naringenin-chalcone or chalcone) which can under specific conditions spontaneously isomerize into naringenin.</text>
</comment>
<comment type="catalytic activity">
    <reaction evidence="1">
        <text>(E)-4-coumaroyl-CoA + 3 malonyl-CoA + 3 H(+) = 2',4,4',6'-tetrahydroxychalcone + 3 CO2 + 4 CoA</text>
        <dbReference type="Rhea" id="RHEA:11128"/>
        <dbReference type="ChEBI" id="CHEBI:15378"/>
        <dbReference type="ChEBI" id="CHEBI:15413"/>
        <dbReference type="ChEBI" id="CHEBI:16526"/>
        <dbReference type="ChEBI" id="CHEBI:57287"/>
        <dbReference type="ChEBI" id="CHEBI:57384"/>
        <dbReference type="ChEBI" id="CHEBI:85008"/>
        <dbReference type="EC" id="2.3.1.74"/>
    </reaction>
</comment>
<comment type="pathway">
    <text>Secondary metabolite biosynthesis; flavonoid biosynthesis.</text>
</comment>
<comment type="similarity">
    <text evidence="2">Belongs to the thiolase-like superfamily. Chalcone/stilbene synthases family.</text>
</comment>
<accession>P48395</accession>
<proteinExistence type="inferred from homology"/>
<dbReference type="EC" id="2.3.1.74"/>
<dbReference type="EMBL" id="U15943">
    <property type="protein sequence ID" value="AAC49028.1"/>
    <property type="molecule type" value="Genomic_DNA"/>
</dbReference>
<dbReference type="SMR" id="P48395"/>
<dbReference type="UniPathway" id="UPA00154"/>
<dbReference type="GO" id="GO:0016210">
    <property type="term" value="F:naringenin-chalcone synthase activity"/>
    <property type="evidence" value="ECO:0007669"/>
    <property type="project" value="UniProtKB-EC"/>
</dbReference>
<dbReference type="GO" id="GO:0009813">
    <property type="term" value="P:flavonoid biosynthetic process"/>
    <property type="evidence" value="ECO:0007669"/>
    <property type="project" value="UniProtKB-UniPathway"/>
</dbReference>
<dbReference type="GO" id="GO:0030639">
    <property type="term" value="P:polyketide biosynthetic process"/>
    <property type="evidence" value="ECO:0007669"/>
    <property type="project" value="TreeGrafter"/>
</dbReference>
<dbReference type="CDD" id="cd00831">
    <property type="entry name" value="CHS_like"/>
    <property type="match status" value="1"/>
</dbReference>
<dbReference type="FunFam" id="3.40.47.10:FF:000025">
    <property type="entry name" value="Chalcone synthase 2"/>
    <property type="match status" value="1"/>
</dbReference>
<dbReference type="Gene3D" id="3.40.47.10">
    <property type="match status" value="2"/>
</dbReference>
<dbReference type="InterPro" id="IPR012328">
    <property type="entry name" value="Chalcone/stilbene_synt_C"/>
</dbReference>
<dbReference type="InterPro" id="IPR001099">
    <property type="entry name" value="Chalcone/stilbene_synt_N"/>
</dbReference>
<dbReference type="InterPro" id="IPR018088">
    <property type="entry name" value="Chalcone/stilbene_synthase_AS"/>
</dbReference>
<dbReference type="InterPro" id="IPR011141">
    <property type="entry name" value="Polyketide_synthase_type-III"/>
</dbReference>
<dbReference type="InterPro" id="IPR016039">
    <property type="entry name" value="Thiolase-like"/>
</dbReference>
<dbReference type="PANTHER" id="PTHR11877:SF104">
    <property type="entry name" value="CHALCONE SYNTHASE"/>
    <property type="match status" value="1"/>
</dbReference>
<dbReference type="PANTHER" id="PTHR11877">
    <property type="entry name" value="HYDROXYMETHYLGLUTARYL-COA SYNTHASE"/>
    <property type="match status" value="1"/>
</dbReference>
<dbReference type="Pfam" id="PF02797">
    <property type="entry name" value="Chal_sti_synt_C"/>
    <property type="match status" value="1"/>
</dbReference>
<dbReference type="Pfam" id="PF00195">
    <property type="entry name" value="Chal_sti_synt_N"/>
    <property type="match status" value="1"/>
</dbReference>
<dbReference type="PIRSF" id="PIRSF000451">
    <property type="entry name" value="PKS_III"/>
    <property type="match status" value="1"/>
</dbReference>
<dbReference type="SUPFAM" id="SSF53901">
    <property type="entry name" value="Thiolase-like"/>
    <property type="match status" value="2"/>
</dbReference>
<dbReference type="PROSITE" id="PS00441">
    <property type="entry name" value="CHALCONE_SYNTH"/>
    <property type="match status" value="1"/>
</dbReference>